<keyword id="KW-0312">Gluconeogenesis</keyword>
<keyword id="KW-0324">Glycolysis</keyword>
<keyword id="KW-0413">Isomerase</keyword>
<keyword id="KW-1185">Reference proteome</keyword>
<dbReference type="EC" id="5.4.2.11" evidence="1"/>
<dbReference type="EMBL" id="CR555306">
    <property type="protein sequence ID" value="CAI06677.1"/>
    <property type="molecule type" value="Genomic_DNA"/>
</dbReference>
<dbReference type="RefSeq" id="WP_011236407.1">
    <property type="nucleotide sequence ID" value="NC_006513.1"/>
</dbReference>
<dbReference type="SMR" id="Q5P7N4"/>
<dbReference type="STRING" id="76114.ebA1052"/>
<dbReference type="KEGG" id="eba:ebA1052"/>
<dbReference type="eggNOG" id="COG0588">
    <property type="taxonomic scope" value="Bacteria"/>
</dbReference>
<dbReference type="HOGENOM" id="CLU_033323_1_1_4"/>
<dbReference type="OrthoDB" id="9781415at2"/>
<dbReference type="UniPathway" id="UPA00109">
    <property type="reaction ID" value="UER00186"/>
</dbReference>
<dbReference type="Proteomes" id="UP000006552">
    <property type="component" value="Chromosome"/>
</dbReference>
<dbReference type="GO" id="GO:0004619">
    <property type="term" value="F:phosphoglycerate mutase activity"/>
    <property type="evidence" value="ECO:0007669"/>
    <property type="project" value="UniProtKB-EC"/>
</dbReference>
<dbReference type="GO" id="GO:0006094">
    <property type="term" value="P:gluconeogenesis"/>
    <property type="evidence" value="ECO:0007669"/>
    <property type="project" value="UniProtKB-UniRule"/>
</dbReference>
<dbReference type="GO" id="GO:0006096">
    <property type="term" value="P:glycolytic process"/>
    <property type="evidence" value="ECO:0007669"/>
    <property type="project" value="UniProtKB-UniRule"/>
</dbReference>
<dbReference type="CDD" id="cd07067">
    <property type="entry name" value="HP_PGM_like"/>
    <property type="match status" value="1"/>
</dbReference>
<dbReference type="FunFam" id="3.40.50.1240:FF:000003">
    <property type="entry name" value="2,3-bisphosphoglycerate-dependent phosphoglycerate mutase"/>
    <property type="match status" value="1"/>
</dbReference>
<dbReference type="Gene3D" id="3.40.50.1240">
    <property type="entry name" value="Phosphoglycerate mutase-like"/>
    <property type="match status" value="1"/>
</dbReference>
<dbReference type="HAMAP" id="MF_01039">
    <property type="entry name" value="PGAM_GpmA"/>
    <property type="match status" value="1"/>
</dbReference>
<dbReference type="InterPro" id="IPR013078">
    <property type="entry name" value="His_Pase_superF_clade-1"/>
</dbReference>
<dbReference type="InterPro" id="IPR029033">
    <property type="entry name" value="His_PPase_superfam"/>
</dbReference>
<dbReference type="InterPro" id="IPR001345">
    <property type="entry name" value="PG/BPGM_mutase_AS"/>
</dbReference>
<dbReference type="InterPro" id="IPR005952">
    <property type="entry name" value="Phosphogly_mut1"/>
</dbReference>
<dbReference type="NCBIfam" id="TIGR01258">
    <property type="entry name" value="pgm_1"/>
    <property type="match status" value="1"/>
</dbReference>
<dbReference type="NCBIfam" id="NF010713">
    <property type="entry name" value="PRK14115.1"/>
    <property type="match status" value="1"/>
</dbReference>
<dbReference type="PANTHER" id="PTHR11931">
    <property type="entry name" value="PHOSPHOGLYCERATE MUTASE"/>
    <property type="match status" value="1"/>
</dbReference>
<dbReference type="Pfam" id="PF00300">
    <property type="entry name" value="His_Phos_1"/>
    <property type="match status" value="1"/>
</dbReference>
<dbReference type="PIRSF" id="PIRSF000709">
    <property type="entry name" value="6PFK_2-Ptase"/>
    <property type="match status" value="1"/>
</dbReference>
<dbReference type="SMART" id="SM00855">
    <property type="entry name" value="PGAM"/>
    <property type="match status" value="1"/>
</dbReference>
<dbReference type="SUPFAM" id="SSF53254">
    <property type="entry name" value="Phosphoglycerate mutase-like"/>
    <property type="match status" value="1"/>
</dbReference>
<dbReference type="PROSITE" id="PS00175">
    <property type="entry name" value="PG_MUTASE"/>
    <property type="match status" value="1"/>
</dbReference>
<organism>
    <name type="scientific">Aromatoleum aromaticum (strain DSM 19018 / LMG 30748 / EbN1)</name>
    <name type="common">Azoarcus sp. (strain EbN1)</name>
    <dbReference type="NCBI Taxonomy" id="76114"/>
    <lineage>
        <taxon>Bacteria</taxon>
        <taxon>Pseudomonadati</taxon>
        <taxon>Pseudomonadota</taxon>
        <taxon>Betaproteobacteria</taxon>
        <taxon>Rhodocyclales</taxon>
        <taxon>Rhodocyclaceae</taxon>
        <taxon>Aromatoleum</taxon>
    </lineage>
</organism>
<reference key="1">
    <citation type="journal article" date="2005" name="Arch. Microbiol.">
        <title>The genome sequence of an anaerobic aromatic-degrading denitrifying bacterium, strain EbN1.</title>
        <authorList>
            <person name="Rabus R."/>
            <person name="Kube M."/>
            <person name="Heider J."/>
            <person name="Beck A."/>
            <person name="Heitmann K."/>
            <person name="Widdel F."/>
            <person name="Reinhardt R."/>
        </authorList>
    </citation>
    <scope>NUCLEOTIDE SEQUENCE [LARGE SCALE GENOMIC DNA]</scope>
    <source>
        <strain>DSM 19018 / LMG 30748 / EbN1</strain>
    </source>
</reference>
<accession>Q5P7N4</accession>
<proteinExistence type="inferred from homology"/>
<sequence length="249" mass="28045">MYKIVLLRHGESTWNKDNRFTGWTDVDLTEKGVEEARGAGHLLKREGYTFDLAYTSVLKRANKTLNIVLEELDSLWLPVEHSWRLNERHYGDLQGLNKAETAAKFGDDQVLVWRRSYDTPPPPLPEGDERLTSGDPRYASLPRAQFPRTECLKDTVARFVPYWETVIVPNILAGRRILIAAHGNSLRALIKYLDNISDSEIVGLNIPTAQPLVYELDANLRPIRSYYLADADTIRAAEAAVAGQGKAKG</sequence>
<evidence type="ECO:0000255" key="1">
    <source>
        <dbReference type="HAMAP-Rule" id="MF_01039"/>
    </source>
</evidence>
<comment type="function">
    <text evidence="1">Catalyzes the interconversion of 2-phosphoglycerate and 3-phosphoglycerate.</text>
</comment>
<comment type="catalytic activity">
    <reaction evidence="1">
        <text>(2R)-2-phosphoglycerate = (2R)-3-phosphoglycerate</text>
        <dbReference type="Rhea" id="RHEA:15901"/>
        <dbReference type="ChEBI" id="CHEBI:58272"/>
        <dbReference type="ChEBI" id="CHEBI:58289"/>
        <dbReference type="EC" id="5.4.2.11"/>
    </reaction>
</comment>
<comment type="pathway">
    <text evidence="1">Carbohydrate degradation; glycolysis; pyruvate from D-glyceraldehyde 3-phosphate: step 3/5.</text>
</comment>
<comment type="subunit">
    <text evidence="1">Homodimer.</text>
</comment>
<comment type="similarity">
    <text evidence="1">Belongs to the phosphoglycerate mutase family. BPG-dependent PGAM subfamily.</text>
</comment>
<gene>
    <name evidence="1" type="primary">gpmA</name>
    <name type="ordered locus">AZOSEA05550</name>
    <name type="ORF">ebA1052</name>
</gene>
<feature type="chain" id="PRO_0000229101" description="2,3-bisphosphoglycerate-dependent phosphoglycerate mutase">
    <location>
        <begin position="1"/>
        <end position="249"/>
    </location>
</feature>
<feature type="active site" description="Tele-phosphohistidine intermediate" evidence="1">
    <location>
        <position position="9"/>
    </location>
</feature>
<feature type="active site" description="Proton donor/acceptor" evidence="1">
    <location>
        <position position="87"/>
    </location>
</feature>
<feature type="binding site" evidence="1">
    <location>
        <begin position="8"/>
        <end position="15"/>
    </location>
    <ligand>
        <name>substrate</name>
    </ligand>
</feature>
<feature type="binding site" evidence="1">
    <location>
        <begin position="21"/>
        <end position="22"/>
    </location>
    <ligand>
        <name>substrate</name>
    </ligand>
</feature>
<feature type="binding site" evidence="1">
    <location>
        <position position="60"/>
    </location>
    <ligand>
        <name>substrate</name>
    </ligand>
</feature>
<feature type="binding site" evidence="1">
    <location>
        <begin position="87"/>
        <end position="90"/>
    </location>
    <ligand>
        <name>substrate</name>
    </ligand>
</feature>
<feature type="binding site" evidence="1">
    <location>
        <position position="98"/>
    </location>
    <ligand>
        <name>substrate</name>
    </ligand>
</feature>
<feature type="binding site" evidence="1">
    <location>
        <begin position="114"/>
        <end position="115"/>
    </location>
    <ligand>
        <name>substrate</name>
    </ligand>
</feature>
<feature type="binding site" evidence="1">
    <location>
        <begin position="183"/>
        <end position="184"/>
    </location>
    <ligand>
        <name>substrate</name>
    </ligand>
</feature>
<feature type="site" description="Transition state stabilizer" evidence="1">
    <location>
        <position position="182"/>
    </location>
</feature>
<protein>
    <recommendedName>
        <fullName evidence="1">2,3-bisphosphoglycerate-dependent phosphoglycerate mutase</fullName>
        <shortName evidence="1">BPG-dependent PGAM</shortName>
        <shortName evidence="1">PGAM</shortName>
        <shortName evidence="1">Phosphoglyceromutase</shortName>
        <shortName evidence="1">dPGM</shortName>
        <ecNumber evidence="1">5.4.2.11</ecNumber>
    </recommendedName>
</protein>
<name>GPMA_AROAE</name>